<protein>
    <recommendedName>
        <fullName>Uncharacterized protein MJ0327</fullName>
    </recommendedName>
</protein>
<dbReference type="EMBL" id="L77117">
    <property type="protein sequence ID" value="AAB98315.1"/>
    <property type="molecule type" value="Genomic_DNA"/>
</dbReference>
<dbReference type="PIR" id="G64340">
    <property type="entry name" value="G64340"/>
</dbReference>
<dbReference type="PDB" id="2KLA">
    <property type="method" value="NMR"/>
    <property type="chains" value="A=1-104"/>
</dbReference>
<dbReference type="PDB" id="2QTD">
    <property type="method" value="X-ray"/>
    <property type="resolution" value="1.70 A"/>
    <property type="chains" value="A=1-104"/>
</dbReference>
<dbReference type="PDBsum" id="2KLA"/>
<dbReference type="PDBsum" id="2QTD"/>
<dbReference type="BMRB" id="Q57773"/>
<dbReference type="SMR" id="Q57773"/>
<dbReference type="STRING" id="243232.MJ_0327"/>
<dbReference type="PaxDb" id="243232-MJ_0327"/>
<dbReference type="EnsemblBacteria" id="AAB98315">
    <property type="protein sequence ID" value="AAB98315"/>
    <property type="gene ID" value="MJ_0327"/>
</dbReference>
<dbReference type="KEGG" id="mja:MJ_0327"/>
<dbReference type="eggNOG" id="arCOG02734">
    <property type="taxonomic scope" value="Archaea"/>
</dbReference>
<dbReference type="HOGENOM" id="CLU_104194_2_3_2"/>
<dbReference type="InParanoid" id="Q57773"/>
<dbReference type="PhylomeDB" id="Q57773"/>
<dbReference type="EvolutionaryTrace" id="Q57773"/>
<dbReference type="Proteomes" id="UP000000805">
    <property type="component" value="Chromosome"/>
</dbReference>
<dbReference type="Gene3D" id="3.30.420.130">
    <property type="entry name" value="Dinitrogenase iron-molybdenum cofactor biosynthesis domain"/>
    <property type="match status" value="1"/>
</dbReference>
<dbReference type="InterPro" id="IPR003731">
    <property type="entry name" value="Di-Nase_FeMo-co_biosynth"/>
</dbReference>
<dbReference type="InterPro" id="IPR036105">
    <property type="entry name" value="DiNase_FeMo-co_biosyn_sf"/>
</dbReference>
<dbReference type="InterPro" id="IPR051840">
    <property type="entry name" value="NifX/NifY_domain"/>
</dbReference>
<dbReference type="PANTHER" id="PTHR33937:SF2">
    <property type="entry name" value="DINITROGENASE IRON-MOLYBDENUM COFACTOR BIOSYNTHESIS DOMAIN-CONTAINING PROTEIN"/>
    <property type="match status" value="1"/>
</dbReference>
<dbReference type="PANTHER" id="PTHR33937">
    <property type="entry name" value="IRON-MOLYBDENUM PROTEIN-RELATED-RELATED"/>
    <property type="match status" value="1"/>
</dbReference>
<dbReference type="Pfam" id="PF02579">
    <property type="entry name" value="Nitro_FeMo-Co"/>
    <property type="match status" value="1"/>
</dbReference>
<dbReference type="SUPFAM" id="SSF53146">
    <property type="entry name" value="Nitrogenase accessory factor-like"/>
    <property type="match status" value="1"/>
</dbReference>
<name>Y327_METJA</name>
<accession>Q57773</accession>
<proteinExistence type="evidence at protein level"/>
<sequence length="104" mass="11898">MINMKVAISMDVDKISNSFEDCKYFLIVRIDDNEVKSTKVIFNDESGKKSIVKENVNAIICKNISEENYKKFSKKIEIYHAEGDDVDKNISLFIEGELSKISNP</sequence>
<reference key="1">
    <citation type="journal article" date="1996" name="Science">
        <title>Complete genome sequence of the methanogenic archaeon, Methanococcus jannaschii.</title>
        <authorList>
            <person name="Bult C.J."/>
            <person name="White O."/>
            <person name="Olsen G.J."/>
            <person name="Zhou L."/>
            <person name="Fleischmann R.D."/>
            <person name="Sutton G.G."/>
            <person name="Blake J.A."/>
            <person name="FitzGerald L.M."/>
            <person name="Clayton R.A."/>
            <person name="Gocayne J.D."/>
            <person name="Kerlavage A.R."/>
            <person name="Dougherty B.A."/>
            <person name="Tomb J.-F."/>
            <person name="Adams M.D."/>
            <person name="Reich C.I."/>
            <person name="Overbeek R."/>
            <person name="Kirkness E.F."/>
            <person name="Weinstock K.G."/>
            <person name="Merrick J.M."/>
            <person name="Glodek A."/>
            <person name="Scott J.L."/>
            <person name="Geoghagen N.S.M."/>
            <person name="Weidman J.F."/>
            <person name="Fuhrmann J.L."/>
            <person name="Nguyen D."/>
            <person name="Utterback T.R."/>
            <person name="Kelley J.M."/>
            <person name="Peterson J.D."/>
            <person name="Sadow P.W."/>
            <person name="Hanna M.C."/>
            <person name="Cotton M.D."/>
            <person name="Roberts K.M."/>
            <person name="Hurst M.A."/>
            <person name="Kaine B.P."/>
            <person name="Borodovsky M."/>
            <person name="Klenk H.-P."/>
            <person name="Fraser C.M."/>
            <person name="Smith H.O."/>
            <person name="Woese C.R."/>
            <person name="Venter J.C."/>
        </authorList>
    </citation>
    <scope>NUCLEOTIDE SEQUENCE [LARGE SCALE GENOMIC DNA]</scope>
    <source>
        <strain>ATCC 43067 / DSM 2661 / JAL-1 / JCM 10045 / NBRC 100440</strain>
    </source>
</reference>
<keyword id="KW-0002">3D-structure</keyword>
<keyword id="KW-1185">Reference proteome</keyword>
<gene>
    <name type="ordered locus">MJ0327</name>
</gene>
<feature type="chain" id="PRO_0000106796" description="Uncharacterized protein MJ0327">
    <location>
        <begin position="1"/>
        <end position="104"/>
    </location>
</feature>
<feature type="strand" evidence="1">
    <location>
        <begin position="4"/>
        <end position="10"/>
    </location>
</feature>
<feature type="strand" evidence="1">
    <location>
        <begin position="12"/>
        <end position="15"/>
    </location>
</feature>
<feature type="turn" evidence="1">
    <location>
        <begin position="19"/>
        <end position="21"/>
    </location>
</feature>
<feature type="strand" evidence="1">
    <location>
        <begin position="23"/>
        <end position="31"/>
    </location>
</feature>
<feature type="strand" evidence="1">
    <location>
        <begin position="34"/>
        <end position="44"/>
    </location>
</feature>
<feature type="helix" evidence="1">
    <location>
        <begin position="45"/>
        <end position="53"/>
    </location>
</feature>
<feature type="strand" evidence="1">
    <location>
        <begin position="57"/>
        <end position="62"/>
    </location>
</feature>
<feature type="helix" evidence="1">
    <location>
        <begin position="66"/>
        <end position="73"/>
    </location>
</feature>
<feature type="strand" evidence="1">
    <location>
        <begin position="77"/>
        <end position="80"/>
    </location>
</feature>
<feature type="helix" evidence="1">
    <location>
        <begin position="86"/>
        <end position="94"/>
    </location>
</feature>
<organism>
    <name type="scientific">Methanocaldococcus jannaschii (strain ATCC 43067 / DSM 2661 / JAL-1 / JCM 10045 / NBRC 100440)</name>
    <name type="common">Methanococcus jannaschii</name>
    <dbReference type="NCBI Taxonomy" id="243232"/>
    <lineage>
        <taxon>Archaea</taxon>
        <taxon>Methanobacteriati</taxon>
        <taxon>Methanobacteriota</taxon>
        <taxon>Methanomada group</taxon>
        <taxon>Methanococci</taxon>
        <taxon>Methanococcales</taxon>
        <taxon>Methanocaldococcaceae</taxon>
        <taxon>Methanocaldococcus</taxon>
    </lineage>
</organism>
<evidence type="ECO:0007829" key="1">
    <source>
        <dbReference type="PDB" id="2QTD"/>
    </source>
</evidence>